<protein>
    <recommendedName>
        <fullName>UDP-glucuronate:xylan alpha-glucuronosyltransferase 1</fullName>
        <shortName>UDP-GlcA:xylan glucuronyltransferase 1</shortName>
        <ecNumber>2.4.1.-</ecNumber>
    </recommendedName>
    <alternativeName>
        <fullName>Glycogenin-like protein 1</fullName>
    </alternativeName>
    <alternativeName>
        <fullName>Plant glycogenin-like starch initiation protein 1</fullName>
    </alternativeName>
    <alternativeName>
        <fullName>Protein GLUCURONIC ACID SUBSTITUTION OF XYLAN 1</fullName>
        <shortName>AtGUX1</shortName>
    </alternativeName>
</protein>
<gene>
    <name type="primary">GUX1</name>
    <name type="synonym">PGSIP1</name>
    <name type="ordered locus">At3g18660</name>
    <name type="ORF">MVE11.2</name>
</gene>
<feature type="chain" id="PRO_0000416733" description="UDP-glucuronate:xylan alpha-glucuronosyltransferase 1">
    <location>
        <begin position="1"/>
        <end position="659"/>
    </location>
</feature>
<feature type="transmembrane region" description="Helical; Signal-anchor for type II membrane protein" evidence="3">
    <location>
        <begin position="70"/>
        <end position="90"/>
    </location>
</feature>
<feature type="region of interest" description="Disordered" evidence="4">
    <location>
        <begin position="1"/>
        <end position="20"/>
    </location>
</feature>
<feature type="compositionally biased region" description="Low complexity" evidence="4">
    <location>
        <begin position="1"/>
        <end position="14"/>
    </location>
</feature>
<feature type="binding site" evidence="2">
    <location>
        <begin position="416"/>
        <end position="418"/>
    </location>
    <ligand>
        <name>substrate</name>
    </ligand>
</feature>
<feature type="binding site" evidence="2">
    <location>
        <position position="416"/>
    </location>
    <ligand>
        <name>Mn(2+)</name>
        <dbReference type="ChEBI" id="CHEBI:29035"/>
    </ligand>
</feature>
<feature type="binding site" evidence="2">
    <location>
        <position position="418"/>
    </location>
    <ligand>
        <name>Mn(2+)</name>
        <dbReference type="ChEBI" id="CHEBI:29035"/>
    </ligand>
</feature>
<feature type="binding site" evidence="2">
    <location>
        <begin position="445"/>
        <end position="447"/>
    </location>
    <ligand>
        <name>substrate</name>
    </ligand>
</feature>
<feature type="binding site" evidence="2">
    <location>
        <begin position="472"/>
        <end position="476"/>
    </location>
    <ligand>
        <name>substrate</name>
    </ligand>
</feature>
<feature type="binding site" evidence="2">
    <location>
        <begin position="526"/>
        <end position="531"/>
    </location>
    <ligand>
        <name>substrate</name>
    </ligand>
</feature>
<feature type="binding site" evidence="2">
    <location>
        <position position="526"/>
    </location>
    <ligand>
        <name>Mn(2+)</name>
        <dbReference type="ChEBI" id="CHEBI:29035"/>
    </ligand>
</feature>
<feature type="site" description="Important for catalytic activity" evidence="1">
    <location>
        <position position="400"/>
    </location>
</feature>
<feature type="splice variant" id="VSP_042766" description="In isoform 2." evidence="7">
    <location>
        <begin position="105"/>
        <end position="108"/>
    </location>
</feature>
<keyword id="KW-0025">Alternative splicing</keyword>
<keyword id="KW-0961">Cell wall biogenesis/degradation</keyword>
<keyword id="KW-0328">Glycosyltransferase</keyword>
<keyword id="KW-0333">Golgi apparatus</keyword>
<keyword id="KW-0464">Manganese</keyword>
<keyword id="KW-0472">Membrane</keyword>
<keyword id="KW-0479">Metal-binding</keyword>
<keyword id="KW-1185">Reference proteome</keyword>
<keyword id="KW-0735">Signal-anchor</keyword>
<keyword id="KW-0808">Transferase</keyword>
<keyword id="KW-0812">Transmembrane</keyword>
<keyword id="KW-1133">Transmembrane helix</keyword>
<evidence type="ECO:0000250" key="1">
    <source>
        <dbReference type="UniProtKB" id="P13280"/>
    </source>
</evidence>
<evidence type="ECO:0000250" key="2">
    <source>
        <dbReference type="UniProtKB" id="P46976"/>
    </source>
</evidence>
<evidence type="ECO:0000255" key="3"/>
<evidence type="ECO:0000256" key="4">
    <source>
        <dbReference type="SAM" id="MobiDB-lite"/>
    </source>
</evidence>
<evidence type="ECO:0000269" key="5">
    <source>
    </source>
</evidence>
<evidence type="ECO:0000269" key="6">
    <source>
    </source>
</evidence>
<evidence type="ECO:0000303" key="7">
    <source>
    </source>
</evidence>
<evidence type="ECO:0000305" key="8"/>
<evidence type="ECO:0000305" key="9">
    <source>
    </source>
</evidence>
<evidence type="ECO:0000305" key="10">
    <source>
    </source>
</evidence>
<organism>
    <name type="scientific">Arabidopsis thaliana</name>
    <name type="common">Mouse-ear cress</name>
    <dbReference type="NCBI Taxonomy" id="3702"/>
    <lineage>
        <taxon>Eukaryota</taxon>
        <taxon>Viridiplantae</taxon>
        <taxon>Streptophyta</taxon>
        <taxon>Embryophyta</taxon>
        <taxon>Tracheophyta</taxon>
        <taxon>Spermatophyta</taxon>
        <taxon>Magnoliopsida</taxon>
        <taxon>eudicotyledons</taxon>
        <taxon>Gunneridae</taxon>
        <taxon>Pentapetalae</taxon>
        <taxon>rosids</taxon>
        <taxon>malvids</taxon>
        <taxon>Brassicales</taxon>
        <taxon>Brassicaceae</taxon>
        <taxon>Camelineae</taxon>
        <taxon>Arabidopsis</taxon>
    </lineage>
</organism>
<dbReference type="EC" id="2.4.1.-"/>
<dbReference type="EMBL" id="AY749109">
    <property type="protein sequence ID" value="AAU93699.1"/>
    <property type="molecule type" value="mRNA"/>
</dbReference>
<dbReference type="EMBL" id="AB026654">
    <property type="protein sequence ID" value="BAB01792.1"/>
    <property type="molecule type" value="Genomic_DNA"/>
</dbReference>
<dbReference type="EMBL" id="CP002686">
    <property type="protein sequence ID" value="AEE76127.1"/>
    <property type="molecule type" value="Genomic_DNA"/>
</dbReference>
<dbReference type="EMBL" id="CP002686">
    <property type="protein sequence ID" value="AEE76128.1"/>
    <property type="molecule type" value="Genomic_DNA"/>
</dbReference>
<dbReference type="EMBL" id="AY056133">
    <property type="protein sequence ID" value="AAL07212.1"/>
    <property type="molecule type" value="mRNA"/>
</dbReference>
<dbReference type="EMBL" id="AY142690">
    <property type="protein sequence ID" value="AAN13228.1"/>
    <property type="molecule type" value="mRNA"/>
</dbReference>
<dbReference type="RefSeq" id="NP_001030722.1">
    <molecule id="Q9LSB1-1"/>
    <property type="nucleotide sequence ID" value="NM_001035645.3"/>
</dbReference>
<dbReference type="RefSeq" id="NP_566615.1">
    <molecule id="Q9LSB1-2"/>
    <property type="nucleotide sequence ID" value="NM_112752.3"/>
</dbReference>
<dbReference type="SMR" id="Q9LSB1"/>
<dbReference type="BioGRID" id="6730">
    <property type="interactions" value="1"/>
</dbReference>
<dbReference type="FunCoup" id="Q9LSB1">
    <property type="interactions" value="54"/>
</dbReference>
<dbReference type="IntAct" id="Q9LSB1">
    <property type="interactions" value="1"/>
</dbReference>
<dbReference type="STRING" id="3702.Q9LSB1"/>
<dbReference type="CAZy" id="GT8">
    <property type="family name" value="Glycosyltransferase Family 8"/>
</dbReference>
<dbReference type="PaxDb" id="3702-AT3G18660.2"/>
<dbReference type="ProteomicsDB" id="230119">
    <molecule id="Q9LSB1-1"/>
</dbReference>
<dbReference type="EnsemblPlants" id="AT3G18660.1">
    <molecule id="Q9LSB1-2"/>
    <property type="protein sequence ID" value="AT3G18660.1"/>
    <property type="gene ID" value="AT3G18660"/>
</dbReference>
<dbReference type="EnsemblPlants" id="AT3G18660.2">
    <molecule id="Q9LSB1-1"/>
    <property type="protein sequence ID" value="AT3G18660.2"/>
    <property type="gene ID" value="AT3G18660"/>
</dbReference>
<dbReference type="GeneID" id="821397"/>
<dbReference type="Gramene" id="AT3G18660.1">
    <molecule id="Q9LSB1-2"/>
    <property type="protein sequence ID" value="AT3G18660.1"/>
    <property type="gene ID" value="AT3G18660"/>
</dbReference>
<dbReference type="Gramene" id="AT3G18660.2">
    <molecule id="Q9LSB1-1"/>
    <property type="protein sequence ID" value="AT3G18660.2"/>
    <property type="gene ID" value="AT3G18660"/>
</dbReference>
<dbReference type="KEGG" id="ath:AT3G18660"/>
<dbReference type="Araport" id="AT3G18660"/>
<dbReference type="TAIR" id="AT3G18660">
    <property type="gene designation" value="PGSIP1"/>
</dbReference>
<dbReference type="eggNOG" id="KOG1950">
    <property type="taxonomic scope" value="Eukaryota"/>
</dbReference>
<dbReference type="InParanoid" id="Q9LSB1"/>
<dbReference type="OMA" id="CNWNADI"/>
<dbReference type="PhylomeDB" id="Q9LSB1"/>
<dbReference type="BioCyc" id="ARA:AT3G18660-MONOMER"/>
<dbReference type="PRO" id="PR:Q9LSB1"/>
<dbReference type="Proteomes" id="UP000006548">
    <property type="component" value="Chromosome 3"/>
</dbReference>
<dbReference type="ExpressionAtlas" id="Q9LSB1">
    <property type="expression patterns" value="baseline and differential"/>
</dbReference>
<dbReference type="GO" id="GO:0005794">
    <property type="term" value="C:Golgi apparatus"/>
    <property type="evidence" value="ECO:0000314"/>
    <property type="project" value="TAIR"/>
</dbReference>
<dbReference type="GO" id="GO:0000139">
    <property type="term" value="C:Golgi membrane"/>
    <property type="evidence" value="ECO:0007669"/>
    <property type="project" value="UniProtKB-SubCell"/>
</dbReference>
<dbReference type="GO" id="GO:0015020">
    <property type="term" value="F:glucuronosyltransferase activity"/>
    <property type="evidence" value="ECO:0000314"/>
    <property type="project" value="TAIR"/>
</dbReference>
<dbReference type="GO" id="GO:0080116">
    <property type="term" value="F:glucuronoxylan glucuronosyltransferase activity"/>
    <property type="evidence" value="ECO:0000315"/>
    <property type="project" value="TAIR"/>
</dbReference>
<dbReference type="GO" id="GO:0046872">
    <property type="term" value="F:metal ion binding"/>
    <property type="evidence" value="ECO:0007669"/>
    <property type="project" value="UniProtKB-KW"/>
</dbReference>
<dbReference type="GO" id="GO:0071555">
    <property type="term" value="P:cell wall organization"/>
    <property type="evidence" value="ECO:0007669"/>
    <property type="project" value="UniProtKB-KW"/>
</dbReference>
<dbReference type="GO" id="GO:0010417">
    <property type="term" value="P:glucuronoxylan biosynthetic process"/>
    <property type="evidence" value="ECO:0000315"/>
    <property type="project" value="TAIR"/>
</dbReference>
<dbReference type="GO" id="GO:0009834">
    <property type="term" value="P:plant-type secondary cell wall biogenesis"/>
    <property type="evidence" value="ECO:0000316"/>
    <property type="project" value="TAIR"/>
</dbReference>
<dbReference type="GO" id="GO:0045492">
    <property type="term" value="P:xylan biosynthetic process"/>
    <property type="evidence" value="ECO:0000314"/>
    <property type="project" value="TAIR"/>
</dbReference>
<dbReference type="CDD" id="cd02537">
    <property type="entry name" value="GT8_Glycogenin"/>
    <property type="match status" value="1"/>
</dbReference>
<dbReference type="FunFam" id="3.90.550.10:FF:000018">
    <property type="entry name" value="Hexosyltransferase"/>
    <property type="match status" value="1"/>
</dbReference>
<dbReference type="Gene3D" id="3.90.550.10">
    <property type="entry name" value="Spore Coat Polysaccharide Biosynthesis Protein SpsA, Chain A"/>
    <property type="match status" value="1"/>
</dbReference>
<dbReference type="InterPro" id="IPR002495">
    <property type="entry name" value="Glyco_trans_8"/>
</dbReference>
<dbReference type="InterPro" id="IPR050587">
    <property type="entry name" value="GNT1/Glycosyltrans_8"/>
</dbReference>
<dbReference type="InterPro" id="IPR029044">
    <property type="entry name" value="Nucleotide-diphossugar_trans"/>
</dbReference>
<dbReference type="PANTHER" id="PTHR11183">
    <property type="entry name" value="GLYCOGENIN SUBFAMILY MEMBER"/>
    <property type="match status" value="1"/>
</dbReference>
<dbReference type="Pfam" id="PF01501">
    <property type="entry name" value="Glyco_transf_8"/>
    <property type="match status" value="1"/>
</dbReference>
<dbReference type="SUPFAM" id="SSF53448">
    <property type="entry name" value="Nucleotide-diphospho-sugar transferases"/>
    <property type="match status" value="1"/>
</dbReference>
<name>GUX1_ARATH</name>
<accession>Q9LSB1</accession>
<accession>Q940B5</accession>
<proteinExistence type="evidence at transcript level"/>
<reference key="1">
    <citation type="journal article" date="2005" name="Plant Sci.">
        <title>Reduced expression of a protein homologous to glycogenin leads to reduction of starch content in Arabidopsis leaves.</title>
        <authorList>
            <person name="Chatterjee M."/>
            <person name="Berbezy P."/>
            <person name="Vyas D."/>
            <person name="Coates S."/>
            <person name="Barsby T."/>
        </authorList>
        <dbReference type="AGRICOLA" id="IND43669941"/>
    </citation>
    <scope>NUCLEOTIDE SEQUENCE [MRNA] (ISOFORM 1)</scope>
    <scope>GENE FAMILY</scope>
</reference>
<reference key="2">
    <citation type="journal article" date="2000" name="DNA Res.">
        <title>Structural analysis of Arabidopsis thaliana chromosome 3. I. Sequence features of the regions of 4,504,864 bp covered by sixty P1 and TAC clones.</title>
        <authorList>
            <person name="Sato S."/>
            <person name="Nakamura Y."/>
            <person name="Kaneko T."/>
            <person name="Katoh T."/>
            <person name="Asamizu E."/>
            <person name="Tabata S."/>
        </authorList>
    </citation>
    <scope>NUCLEOTIDE SEQUENCE [LARGE SCALE GENOMIC DNA]</scope>
    <source>
        <strain>cv. Columbia</strain>
    </source>
</reference>
<reference key="3">
    <citation type="journal article" date="2017" name="Plant J.">
        <title>Araport11: a complete reannotation of the Arabidopsis thaliana reference genome.</title>
        <authorList>
            <person name="Cheng C.Y."/>
            <person name="Krishnakumar V."/>
            <person name="Chan A.P."/>
            <person name="Thibaud-Nissen F."/>
            <person name="Schobel S."/>
            <person name="Town C.D."/>
        </authorList>
    </citation>
    <scope>GENOME REANNOTATION</scope>
    <source>
        <strain>cv. Columbia</strain>
    </source>
</reference>
<reference key="4">
    <citation type="journal article" date="2003" name="Science">
        <title>Empirical analysis of transcriptional activity in the Arabidopsis genome.</title>
        <authorList>
            <person name="Yamada K."/>
            <person name="Lim J."/>
            <person name="Dale J.M."/>
            <person name="Chen H."/>
            <person name="Shinn P."/>
            <person name="Palm C.J."/>
            <person name="Southwick A.M."/>
            <person name="Wu H.C."/>
            <person name="Kim C.J."/>
            <person name="Nguyen M."/>
            <person name="Pham P.K."/>
            <person name="Cheuk R.F."/>
            <person name="Karlin-Newmann G."/>
            <person name="Liu S.X."/>
            <person name="Lam B."/>
            <person name="Sakano H."/>
            <person name="Wu T."/>
            <person name="Yu G."/>
            <person name="Miranda M."/>
            <person name="Quach H.L."/>
            <person name="Tripp M."/>
            <person name="Chang C.H."/>
            <person name="Lee J.M."/>
            <person name="Toriumi M.J."/>
            <person name="Chan M.M."/>
            <person name="Tang C.C."/>
            <person name="Onodera C.S."/>
            <person name="Deng J.M."/>
            <person name="Akiyama K."/>
            <person name="Ansari Y."/>
            <person name="Arakawa T."/>
            <person name="Banh J."/>
            <person name="Banno F."/>
            <person name="Bowser L."/>
            <person name="Brooks S.Y."/>
            <person name="Carninci P."/>
            <person name="Chao Q."/>
            <person name="Choy N."/>
            <person name="Enju A."/>
            <person name="Goldsmith A.D."/>
            <person name="Gurjal M."/>
            <person name="Hansen N.F."/>
            <person name="Hayashizaki Y."/>
            <person name="Johnson-Hopson C."/>
            <person name="Hsuan V.W."/>
            <person name="Iida K."/>
            <person name="Karnes M."/>
            <person name="Khan S."/>
            <person name="Koesema E."/>
            <person name="Ishida J."/>
            <person name="Jiang P.X."/>
            <person name="Jones T."/>
            <person name="Kawai J."/>
            <person name="Kamiya A."/>
            <person name="Meyers C."/>
            <person name="Nakajima M."/>
            <person name="Narusaka M."/>
            <person name="Seki M."/>
            <person name="Sakurai T."/>
            <person name="Satou M."/>
            <person name="Tamse R."/>
            <person name="Vaysberg M."/>
            <person name="Wallender E.K."/>
            <person name="Wong C."/>
            <person name="Yamamura Y."/>
            <person name="Yuan S."/>
            <person name="Shinozaki K."/>
            <person name="Davis R.W."/>
            <person name="Theologis A."/>
            <person name="Ecker J.R."/>
        </authorList>
    </citation>
    <scope>NUCLEOTIDE SEQUENCE [LARGE SCALE MRNA] (ISOFORM 2)</scope>
    <source>
        <strain>cv. Columbia</strain>
    </source>
</reference>
<reference key="5">
    <citation type="journal article" date="2010" name="PLoS ONE">
        <title>An integrative approach to the identification of Arabidopsis and rice genes involved in xylan and secondary wall development.</title>
        <authorList>
            <person name="Oikawa A."/>
            <person name="Joshi H.J."/>
            <person name="Rennie E.A."/>
            <person name="Ebert B."/>
            <person name="Manisseri C."/>
            <person name="Heazlewood J.L."/>
            <person name="Scheller H.V."/>
        </authorList>
    </citation>
    <scope>FUNCTION</scope>
    <scope>SUBCELLULAR LOCATION</scope>
</reference>
<reference key="6">
    <citation type="journal article" date="2010" name="Proc. Natl. Acad. Sci. U.S.A.">
        <title>Absence of branches from xylan in Arabidopsis gux mutants reveals potential for simplification of lignocellulosic biomass.</title>
        <authorList>
            <person name="Mortimer J.C."/>
            <person name="Miles G.P."/>
            <person name="Brown D.M."/>
            <person name="Zhang Z."/>
            <person name="Segura M.P."/>
            <person name="Weimar T."/>
            <person name="Yu X."/>
            <person name="Seffen K.A."/>
            <person name="Stephens E."/>
            <person name="Turner S.R."/>
            <person name="Dupree P."/>
        </authorList>
    </citation>
    <scope>FUNCTION</scope>
    <scope>SUBCELLULAR LOCATION</scope>
    <scope>DISRUPTION PHENOTYPE</scope>
</reference>
<sequence>MANSPAAPAPTTTTGGDSRRRLSASIEAICKRRFRRNSKGGGRSDMVKPFNIINFSTQDKNSSCCCFTKFQIVKLLLFILLSATLFTIIYSPEAYHHSLSHSSSRWIWRRQDPRYFSDLDINWDDVTKTLENIEEGRTIGVLNFDSNEIQRWREVSKSKDNGDEEKVVVLNLDYADKNVTWDALYPEWIDEEQETEVPVCPNIPNIKVPTRRLDLIVVKLPCRKEGNWSRDVGRLHLQLAAATVAASAKGFFRGHVFFVSRCFPIPNLFRCKDLVSRRGDVWLYKPNLDTLRDKLQLPVGSCELSLPLGIQDRPSLGNPKREAYATILHSAHVYVCGAIAAAQSIRQSGSTRDLVILVDDNISGYHRSGLEAAGWQIRTIQRIRNPKAEKDAYNEWNYSKFRLWQLTDYDKIIFIDADLLILRNIDFLFSMPEISATGNNGTLFNSGVMVIEPCNCTFQLLMEHINEIESYNGGDQGYLNEVFTWWHRIPKHMNFLKHFWIGDEDDAKRKKTELFGAEPPVLYVLHYLGMKPWLCYRDYDCNFNSDIFVEFATDIAHRKWWMVHDAMPQELHQFCYLRSKQKAQLEYDRRQAEAANYADGHWKIRVKDPRFKICIDKLCNWKSMLRHWGESNWTDYESFVPTPPAITVDRRSSLPGHNL</sequence>
<comment type="function">
    <text evidence="5 6">Glycosyltransferase required for the addition of both glucuronic acid and 4-O-methylglucuronic acid branches to xylan in stem cell walls. In association with GUX2, is responsible for almost all of the substitutions of the xylan backbone in stem glucuronoxylan.</text>
</comment>
<comment type="cofactor">
    <cofactor evidence="2">
        <name>Mn(2+)</name>
        <dbReference type="ChEBI" id="CHEBI:29035"/>
    </cofactor>
</comment>
<comment type="subcellular location">
    <subcellularLocation>
        <location evidence="9 10">Golgi apparatus membrane</location>
        <topology evidence="9 10">Single-pass type II membrane protein</topology>
    </subcellularLocation>
</comment>
<comment type="alternative products">
    <event type="alternative splicing"/>
    <isoform>
        <id>Q9LSB1-1</id>
        <name>1</name>
        <sequence type="displayed"/>
    </isoform>
    <isoform>
        <id>Q9LSB1-2</id>
        <name>2</name>
        <sequence type="described" ref="VSP_042766"/>
    </isoform>
</comment>
<comment type="disruption phenotype">
    <text evidence="5">No visible phenotype under normal growth conditions, but mutant plants show reduced xylan substitution.</text>
</comment>
<comment type="similarity">
    <text evidence="8">Belongs to the glycosyltransferase 8 family. Glycogenin subfamily.</text>
</comment>